<sequence length="163" mass="17764">MPLASPRQLFLLAFLACVAIMGGALYLEHVVGLEACPLCVVQRIFFILIGLTCLAGAIQGPGLRGRRIYSVLVFLLALGGGATAARQVWLQTVPLDQLPACLPSLDYMMQALPFQEVIRLVLHGTADCAQVSWTLFTLSIPEWSLLAFVAYLGFSIVQFLRRA</sequence>
<dbReference type="EMBL" id="M30145">
    <property type="status" value="NOT_ANNOTATED_CDS"/>
    <property type="molecule type" value="Genomic_DNA"/>
</dbReference>
<dbReference type="EMBL" id="AE004091">
    <property type="protein sequence ID" value="AAG08641.1"/>
    <property type="molecule type" value="Genomic_DNA"/>
</dbReference>
<dbReference type="PIR" id="F82988">
    <property type="entry name" value="F82988"/>
</dbReference>
<dbReference type="PIR" id="JQ0144">
    <property type="entry name" value="JQ0144"/>
</dbReference>
<dbReference type="RefSeq" id="WP_003099230.1">
    <property type="nucleotide sequence ID" value="NZ_QZGE01000002.1"/>
</dbReference>
<dbReference type="SMR" id="P21482"/>
<dbReference type="STRING" id="208964.PA5256"/>
<dbReference type="PaxDb" id="208964-PA5256"/>
<dbReference type="DNASU" id="879720"/>
<dbReference type="KEGG" id="pae:PA5256"/>
<dbReference type="PATRIC" id="fig|208964.12.peg.5509"/>
<dbReference type="PseudoCAP" id="PA5256"/>
<dbReference type="HOGENOM" id="CLU_098660_1_1_6"/>
<dbReference type="InParanoid" id="P21482"/>
<dbReference type="OrthoDB" id="3711263at2"/>
<dbReference type="PhylomeDB" id="P21482"/>
<dbReference type="BioCyc" id="PAER208964:G1FZ6-5377-MONOMER"/>
<dbReference type="Proteomes" id="UP000002438">
    <property type="component" value="Chromosome"/>
</dbReference>
<dbReference type="GO" id="GO:0005886">
    <property type="term" value="C:plasma membrane"/>
    <property type="evidence" value="ECO:0007669"/>
    <property type="project" value="UniProtKB-SubCell"/>
</dbReference>
<dbReference type="GO" id="GO:0009055">
    <property type="term" value="F:electron transfer activity"/>
    <property type="evidence" value="ECO:0007669"/>
    <property type="project" value="UniProtKB-UniRule"/>
</dbReference>
<dbReference type="GO" id="GO:0015035">
    <property type="term" value="F:protein-disulfide reductase activity"/>
    <property type="evidence" value="ECO:0000318"/>
    <property type="project" value="GO_Central"/>
</dbReference>
<dbReference type="GO" id="GO:0006457">
    <property type="term" value="P:protein folding"/>
    <property type="evidence" value="ECO:0000315"/>
    <property type="project" value="PseudoCAP"/>
</dbReference>
<dbReference type="Gene3D" id="1.20.1550.10">
    <property type="entry name" value="DsbB-like"/>
    <property type="match status" value="1"/>
</dbReference>
<dbReference type="HAMAP" id="MF_00286">
    <property type="entry name" value="DsbB"/>
    <property type="match status" value="1"/>
</dbReference>
<dbReference type="InterPro" id="IPR003752">
    <property type="entry name" value="DiS_bond_form_DsbB/BdbC"/>
</dbReference>
<dbReference type="InterPro" id="IPR022920">
    <property type="entry name" value="Disulphide_bond_form_DsbB"/>
</dbReference>
<dbReference type="InterPro" id="IPR050183">
    <property type="entry name" value="DsbB"/>
</dbReference>
<dbReference type="InterPro" id="IPR023380">
    <property type="entry name" value="DsbB-like_sf"/>
</dbReference>
<dbReference type="PANTHER" id="PTHR36570">
    <property type="entry name" value="DISULFIDE BOND FORMATION PROTEIN B"/>
    <property type="match status" value="1"/>
</dbReference>
<dbReference type="PANTHER" id="PTHR36570:SF3">
    <property type="entry name" value="DISULFIDE BOND FORMATION PROTEIN B"/>
    <property type="match status" value="1"/>
</dbReference>
<dbReference type="Pfam" id="PF02600">
    <property type="entry name" value="DsbB"/>
    <property type="match status" value="1"/>
</dbReference>
<dbReference type="SUPFAM" id="SSF158442">
    <property type="entry name" value="DsbB-like"/>
    <property type="match status" value="1"/>
</dbReference>
<evidence type="ECO:0000250" key="1"/>
<evidence type="ECO:0000255" key="2"/>
<evidence type="ECO:0000305" key="3"/>
<reference key="1">
    <citation type="journal article" date="1989" name="Gene">
        <title>Nucleotide sequence of a regulatory region controlling alginate synthesis in Pseudomonas aeruginosa: characterization of the algR2 gene.</title>
        <authorList>
            <person name="Kato J."/>
            <person name="Chu L."/>
            <person name="Kitano K."/>
            <person name="Devault J.D."/>
            <person name="Kimbara K."/>
            <person name="Chakrabarty A.M."/>
            <person name="Misra T.K."/>
        </authorList>
    </citation>
    <scope>NUCLEOTIDE SEQUENCE [GENOMIC DNA]</scope>
</reference>
<reference key="2">
    <citation type="journal article" date="2000" name="Nature">
        <title>Complete genome sequence of Pseudomonas aeruginosa PAO1, an opportunistic pathogen.</title>
        <authorList>
            <person name="Stover C.K."/>
            <person name="Pham X.-Q.T."/>
            <person name="Erwin A.L."/>
            <person name="Mizoguchi S.D."/>
            <person name="Warrener P."/>
            <person name="Hickey M.J."/>
            <person name="Brinkman F.S.L."/>
            <person name="Hufnagle W.O."/>
            <person name="Kowalik D.J."/>
            <person name="Lagrou M."/>
            <person name="Garber R.L."/>
            <person name="Goltry L."/>
            <person name="Tolentino E."/>
            <person name="Westbrock-Wadman S."/>
            <person name="Yuan Y."/>
            <person name="Brody L.L."/>
            <person name="Coulter S.N."/>
            <person name="Folger K.R."/>
            <person name="Kas A."/>
            <person name="Larbig K."/>
            <person name="Lim R.M."/>
            <person name="Smith K.A."/>
            <person name="Spencer D.H."/>
            <person name="Wong G.K.-S."/>
            <person name="Wu Z."/>
            <person name="Paulsen I.T."/>
            <person name="Reizer J."/>
            <person name="Saier M.H. Jr."/>
            <person name="Hancock R.E.W."/>
            <person name="Lory S."/>
            <person name="Olson M.V."/>
        </authorList>
    </citation>
    <scope>NUCLEOTIDE SEQUENCE [LARGE SCALE GENOMIC DNA]</scope>
    <source>
        <strain>ATCC 15692 / DSM 22644 / CIP 104116 / JCM 14847 / LMG 12228 / 1C / PRS 101 / PAO1</strain>
    </source>
</reference>
<keyword id="KW-0997">Cell inner membrane</keyword>
<keyword id="KW-1003">Cell membrane</keyword>
<keyword id="KW-0143">Chaperone</keyword>
<keyword id="KW-1015">Disulfide bond</keyword>
<keyword id="KW-0249">Electron transport</keyword>
<keyword id="KW-0472">Membrane</keyword>
<keyword id="KW-0560">Oxidoreductase</keyword>
<keyword id="KW-0676">Redox-active center</keyword>
<keyword id="KW-1185">Reference proteome</keyword>
<keyword id="KW-0812">Transmembrane</keyword>
<keyword id="KW-1133">Transmembrane helix</keyword>
<keyword id="KW-0813">Transport</keyword>
<name>DSBB1_PSEAE</name>
<gene>
    <name type="primary">dsbB1</name>
    <name type="ordered locus">PA5256</name>
</gene>
<comment type="function">
    <text evidence="1">Required for disulfide bond formation in some periplasmic proteins. Acts by oxidizing the DsbA protein (By similarity).</text>
</comment>
<comment type="subcellular location">
    <subcellularLocation>
        <location evidence="1">Cell inner membrane</location>
        <topology evidence="1">Multi-pass membrane protein</topology>
    </subcellularLocation>
</comment>
<comment type="similarity">
    <text evidence="3">Belongs to the DsbB family.</text>
</comment>
<feature type="chain" id="PRO_0000059350" description="Disulfide bond formation protein B 1">
    <location>
        <begin position="1"/>
        <end position="163"/>
    </location>
</feature>
<feature type="topological domain" description="Cytoplasmic" evidence="2">
    <location>
        <begin position="1"/>
        <end position="9"/>
    </location>
</feature>
<feature type="transmembrane region" description="Helical" evidence="2">
    <location>
        <begin position="10"/>
        <end position="26"/>
    </location>
</feature>
<feature type="topological domain" description="Periplasmic" evidence="2">
    <location>
        <begin position="27"/>
        <end position="44"/>
    </location>
</feature>
<feature type="transmembrane region" description="Helical" evidence="2">
    <location>
        <begin position="45"/>
        <end position="61"/>
    </location>
</feature>
<feature type="topological domain" description="Cytoplasmic" evidence="2">
    <location>
        <begin position="62"/>
        <end position="67"/>
    </location>
</feature>
<feature type="transmembrane region" description="Helical" evidence="2">
    <location>
        <begin position="68"/>
        <end position="85"/>
    </location>
</feature>
<feature type="topological domain" description="Periplasmic" evidence="2">
    <location>
        <begin position="86"/>
        <end position="142"/>
    </location>
</feature>
<feature type="transmembrane region" description="Helical" evidence="2">
    <location>
        <begin position="143"/>
        <end position="161"/>
    </location>
</feature>
<feature type="topological domain" description="Cytoplasmic" evidence="2">
    <location>
        <begin position="162"/>
        <end position="163"/>
    </location>
</feature>
<feature type="disulfide bond" description="Redox-active" evidence="1">
    <location>
        <begin position="36"/>
        <end position="39"/>
    </location>
</feature>
<feature type="disulfide bond" description="Redox-active" evidence="1">
    <location>
        <begin position="101"/>
        <end position="128"/>
    </location>
</feature>
<feature type="sequence conflict" description="In Ref. 1." evidence="3" ref="1">
    <original>A</original>
    <variation>T</variation>
    <location>
        <position position="163"/>
    </location>
</feature>
<proteinExistence type="inferred from homology"/>
<organism>
    <name type="scientific">Pseudomonas aeruginosa (strain ATCC 15692 / DSM 22644 / CIP 104116 / JCM 14847 / LMG 12228 / 1C / PRS 101 / PAO1)</name>
    <dbReference type="NCBI Taxonomy" id="208964"/>
    <lineage>
        <taxon>Bacteria</taxon>
        <taxon>Pseudomonadati</taxon>
        <taxon>Pseudomonadota</taxon>
        <taxon>Gammaproteobacteria</taxon>
        <taxon>Pseudomonadales</taxon>
        <taxon>Pseudomonadaceae</taxon>
        <taxon>Pseudomonas</taxon>
    </lineage>
</organism>
<protein>
    <recommendedName>
        <fullName>Disulfide bond formation protein B 1</fullName>
    </recommendedName>
    <alternativeName>
        <fullName>Disulfide oxidoreductase 1</fullName>
    </alternativeName>
</protein>
<accession>P21482</accession>
<accession>Q9HTT9</accession>